<evidence type="ECO:0000255" key="1">
    <source>
        <dbReference type="HAMAP-Rule" id="MF_01582"/>
    </source>
</evidence>
<reference key="1">
    <citation type="journal article" date="2000" name="Nature">
        <title>The genome sequence of the food-borne pathogen Campylobacter jejuni reveals hypervariable sequences.</title>
        <authorList>
            <person name="Parkhill J."/>
            <person name="Wren B.W."/>
            <person name="Mungall K.L."/>
            <person name="Ketley J.M."/>
            <person name="Churcher C.M."/>
            <person name="Basham D."/>
            <person name="Chillingworth T."/>
            <person name="Davies R.M."/>
            <person name="Feltwell T."/>
            <person name="Holroyd S."/>
            <person name="Jagels K."/>
            <person name="Karlyshev A.V."/>
            <person name="Moule S."/>
            <person name="Pallen M.J."/>
            <person name="Penn C.W."/>
            <person name="Quail M.A."/>
            <person name="Rajandream M.A."/>
            <person name="Rutherford K.M."/>
            <person name="van Vliet A.H.M."/>
            <person name="Whitehead S."/>
            <person name="Barrell B.G."/>
        </authorList>
    </citation>
    <scope>NUCLEOTIDE SEQUENCE [LARGE SCALE GENOMIC DNA]</scope>
    <source>
        <strain>ATCC 700819 / NCTC 11168</strain>
    </source>
</reference>
<organism>
    <name type="scientific">Campylobacter jejuni subsp. jejuni serotype O:2 (strain ATCC 700819 / NCTC 11168)</name>
    <dbReference type="NCBI Taxonomy" id="192222"/>
    <lineage>
        <taxon>Bacteria</taxon>
        <taxon>Pseudomonadati</taxon>
        <taxon>Campylobacterota</taxon>
        <taxon>Epsilonproteobacteria</taxon>
        <taxon>Campylobacterales</taxon>
        <taxon>Campylobacteraceae</taxon>
        <taxon>Campylobacter</taxon>
    </lineage>
</organism>
<proteinExistence type="inferred from homology"/>
<name>SSTT_CAMJE</name>
<sequence length="407" mass="43270">MFSKIIQSYAKGNLIVQICIGIALGILIGISSKEISEIANLLGILFTSALKAIAPMLVFILILTSICTKDFSQSGAKIKNIIILYIVGTFFASACAVLANFFFPVKLVLDGVQTATNSSPTHMSDIFKDLLFKIVDNPINALSSGNYLGILTWAIAGGIALKHCSNEAKQVFIDINEGVLKIVKFVVKLAPFGIFGLVANSVAQTGAQGLLSYVKLLILLVATMLFVTFVINALIVFFYTRKNPFPLIFICLRHSAFFAFFTRSSAANIPVNMALCAKLGIDKEFYGISIPLGATINMAGAAVTIAILSLTAANTVGIEISLLQAFLLSIIATFAACGASGVAGGSLLLIPLACSLFNIDYDIAMKVVAIGFIIGVIQDSVETALNSSTDVLFTAICSKNELNYNIK</sequence>
<feature type="chain" id="PRO_0000309077" description="Serine/threonine transporter SstT">
    <location>
        <begin position="1"/>
        <end position="407"/>
    </location>
</feature>
<feature type="transmembrane region" description="Helical" evidence="1">
    <location>
        <begin position="12"/>
        <end position="32"/>
    </location>
</feature>
<feature type="transmembrane region" description="Helical" evidence="1">
    <location>
        <begin position="42"/>
        <end position="62"/>
    </location>
</feature>
<feature type="transmembrane region" description="Helical" evidence="1">
    <location>
        <begin position="81"/>
        <end position="101"/>
    </location>
</feature>
<feature type="transmembrane region" description="Helical" evidence="1">
    <location>
        <begin position="141"/>
        <end position="161"/>
    </location>
</feature>
<feature type="transmembrane region" description="Helical" evidence="1">
    <location>
        <begin position="179"/>
        <end position="199"/>
    </location>
</feature>
<feature type="transmembrane region" description="Helical" evidence="1">
    <location>
        <begin position="218"/>
        <end position="238"/>
    </location>
</feature>
<feature type="transmembrane region" description="Helical" evidence="1">
    <location>
        <begin position="245"/>
        <end position="267"/>
    </location>
</feature>
<feature type="transmembrane region" description="Helical" evidence="1">
    <location>
        <begin position="288"/>
        <end position="308"/>
    </location>
</feature>
<feature type="transmembrane region" description="Helical" evidence="1">
    <location>
        <begin position="330"/>
        <end position="350"/>
    </location>
</feature>
<gene>
    <name evidence="1" type="primary">sstT</name>
    <name type="ordered locus">Cj1097</name>
</gene>
<accession>Q0P9F7</accession>
<dbReference type="EMBL" id="AL111168">
    <property type="protein sequence ID" value="CAL35214.1"/>
    <property type="molecule type" value="Genomic_DNA"/>
</dbReference>
<dbReference type="PIR" id="D81313">
    <property type="entry name" value="D81313"/>
</dbReference>
<dbReference type="RefSeq" id="WP_002858067.1">
    <property type="nucleotide sequence ID" value="NZ_SZUC01000001.1"/>
</dbReference>
<dbReference type="RefSeq" id="YP_002344490.1">
    <property type="nucleotide sequence ID" value="NC_002163.1"/>
</dbReference>
<dbReference type="SMR" id="Q0P9F7"/>
<dbReference type="IntAct" id="Q0P9F7">
    <property type="interactions" value="8"/>
</dbReference>
<dbReference type="STRING" id="192222.Cj1097"/>
<dbReference type="PaxDb" id="192222-Cj1097"/>
<dbReference type="EnsemblBacteria" id="CAL35214">
    <property type="protein sequence ID" value="CAL35214"/>
    <property type="gene ID" value="Cj1097"/>
</dbReference>
<dbReference type="GeneID" id="905388"/>
<dbReference type="KEGG" id="cje:Cj1097"/>
<dbReference type="PATRIC" id="fig|192222.6.peg.1079"/>
<dbReference type="eggNOG" id="COG3633">
    <property type="taxonomic scope" value="Bacteria"/>
</dbReference>
<dbReference type="HOGENOM" id="CLU_044581_0_0_7"/>
<dbReference type="OrthoDB" id="9766690at2"/>
<dbReference type="Proteomes" id="UP000000799">
    <property type="component" value="Chromosome"/>
</dbReference>
<dbReference type="GO" id="GO:0005886">
    <property type="term" value="C:plasma membrane"/>
    <property type="evidence" value="ECO:0007669"/>
    <property type="project" value="UniProtKB-SubCell"/>
</dbReference>
<dbReference type="GO" id="GO:0005295">
    <property type="term" value="F:neutral L-amino acid:sodium symporter activity"/>
    <property type="evidence" value="ECO:0007669"/>
    <property type="project" value="TreeGrafter"/>
</dbReference>
<dbReference type="GO" id="GO:0032329">
    <property type="term" value="P:serine transport"/>
    <property type="evidence" value="ECO:0007669"/>
    <property type="project" value="InterPro"/>
</dbReference>
<dbReference type="GO" id="GO:0015826">
    <property type="term" value="P:threonine transport"/>
    <property type="evidence" value="ECO:0007669"/>
    <property type="project" value="InterPro"/>
</dbReference>
<dbReference type="Gene3D" id="1.10.3860.10">
    <property type="entry name" value="Sodium:dicarboxylate symporter"/>
    <property type="match status" value="1"/>
</dbReference>
<dbReference type="HAMAP" id="MF_01582">
    <property type="entry name" value="Ser_Thr_transp_SstT"/>
    <property type="match status" value="1"/>
</dbReference>
<dbReference type="InterPro" id="IPR001991">
    <property type="entry name" value="Na-dicarboxylate_symporter"/>
</dbReference>
<dbReference type="InterPro" id="IPR036458">
    <property type="entry name" value="Na:dicarbo_symporter_sf"/>
</dbReference>
<dbReference type="InterPro" id="IPR023025">
    <property type="entry name" value="Ser_Thr_transp_SstT"/>
</dbReference>
<dbReference type="NCBIfam" id="NF010151">
    <property type="entry name" value="PRK13628.1"/>
    <property type="match status" value="1"/>
</dbReference>
<dbReference type="PANTHER" id="PTHR42865">
    <property type="entry name" value="PROTON/GLUTAMATE-ASPARTATE SYMPORTER"/>
    <property type="match status" value="1"/>
</dbReference>
<dbReference type="PANTHER" id="PTHR42865:SF8">
    <property type="entry name" value="SERINE_THREONINE TRANSPORTER SSTT"/>
    <property type="match status" value="1"/>
</dbReference>
<dbReference type="Pfam" id="PF00375">
    <property type="entry name" value="SDF"/>
    <property type="match status" value="1"/>
</dbReference>
<dbReference type="PRINTS" id="PR00173">
    <property type="entry name" value="EDTRNSPORT"/>
</dbReference>
<dbReference type="SUPFAM" id="SSF118215">
    <property type="entry name" value="Proton glutamate symport protein"/>
    <property type="match status" value="1"/>
</dbReference>
<comment type="function">
    <text evidence="1">Involved in the import of serine and threonine into the cell, with the concomitant import of sodium (symport system).</text>
</comment>
<comment type="catalytic activity">
    <reaction evidence="1">
        <text>L-serine(in) + Na(+)(in) = L-serine(out) + Na(+)(out)</text>
        <dbReference type="Rhea" id="RHEA:29575"/>
        <dbReference type="ChEBI" id="CHEBI:29101"/>
        <dbReference type="ChEBI" id="CHEBI:33384"/>
    </reaction>
    <physiologicalReaction direction="right-to-left" evidence="1">
        <dbReference type="Rhea" id="RHEA:29577"/>
    </physiologicalReaction>
</comment>
<comment type="catalytic activity">
    <reaction evidence="1">
        <text>L-threonine(in) + Na(+)(in) = L-threonine(out) + Na(+)(out)</text>
        <dbReference type="Rhea" id="RHEA:69999"/>
        <dbReference type="ChEBI" id="CHEBI:29101"/>
        <dbReference type="ChEBI" id="CHEBI:57926"/>
    </reaction>
    <physiologicalReaction direction="right-to-left" evidence="1">
        <dbReference type="Rhea" id="RHEA:70001"/>
    </physiologicalReaction>
</comment>
<comment type="subcellular location">
    <subcellularLocation>
        <location evidence="1">Cell inner membrane</location>
        <topology evidence="1">Multi-pass membrane protein</topology>
    </subcellularLocation>
</comment>
<comment type="similarity">
    <text evidence="1">Belongs to the dicarboxylate/amino acid:cation symporter (DAACS) (TC 2.A.23) family.</text>
</comment>
<keyword id="KW-0029">Amino-acid transport</keyword>
<keyword id="KW-0997">Cell inner membrane</keyword>
<keyword id="KW-1003">Cell membrane</keyword>
<keyword id="KW-0472">Membrane</keyword>
<keyword id="KW-1185">Reference proteome</keyword>
<keyword id="KW-0769">Symport</keyword>
<keyword id="KW-0812">Transmembrane</keyword>
<keyword id="KW-1133">Transmembrane helix</keyword>
<keyword id="KW-0813">Transport</keyword>
<protein>
    <recommendedName>
        <fullName evidence="1">Serine/threonine transporter SstT</fullName>
    </recommendedName>
    <alternativeName>
        <fullName evidence="1">Na(+)/serine-threonine symporter</fullName>
    </alternativeName>
</protein>